<feature type="chain" id="PRO_0000057442" description="tRNA pseudouridine synthase A">
    <location>
        <begin position="1"/>
        <end position="245"/>
    </location>
</feature>
<feature type="active site" description="Nucleophile" evidence="1">
    <location>
        <position position="52"/>
    </location>
</feature>
<feature type="binding site" evidence="1">
    <location>
        <position position="111"/>
    </location>
    <ligand>
        <name>substrate</name>
    </ligand>
</feature>
<gene>
    <name evidence="1" type="primary">truA</name>
    <name type="ordered locus">RT0846</name>
</gene>
<accession>Q68VQ6</accession>
<name>TRUA_RICTY</name>
<protein>
    <recommendedName>
        <fullName evidence="1">tRNA pseudouridine synthase A</fullName>
        <ecNumber evidence="1">5.4.99.12</ecNumber>
    </recommendedName>
    <alternativeName>
        <fullName evidence="1">tRNA pseudouridine(38-40) synthase</fullName>
    </alternativeName>
    <alternativeName>
        <fullName evidence="1">tRNA pseudouridylate synthase I</fullName>
    </alternativeName>
    <alternativeName>
        <fullName evidence="1">tRNA-uridine isomerase I</fullName>
    </alternativeName>
</protein>
<proteinExistence type="inferred from homology"/>
<sequence>MYRYKITIEYLGTHFSGWQRQAGVLSVQQILEEAIYKFSGEQVTLFGSGRTDAGVHAIGQIAHFDLSKYLEPYKIIKAINYFVRPYAVGVWNCELVSNNFHARFSATSRHYIYRIVNRTYPSVIDLNRVWWISAPLDVLAMQQAATYLLGKHDFTSFRSSSCQSKSPIKTLTEINIIKEYEEIKLYLSAPSFLHYMVRNIVGSLVLVGKNIWQVEQIKNVLDAKDRKVAGPTAPAFGLYFIKAEY</sequence>
<comment type="function">
    <text evidence="1">Formation of pseudouridine at positions 38, 39 and 40 in the anticodon stem and loop of transfer RNAs.</text>
</comment>
<comment type="catalytic activity">
    <reaction evidence="1">
        <text>uridine(38/39/40) in tRNA = pseudouridine(38/39/40) in tRNA</text>
        <dbReference type="Rhea" id="RHEA:22376"/>
        <dbReference type="Rhea" id="RHEA-COMP:10085"/>
        <dbReference type="Rhea" id="RHEA-COMP:10087"/>
        <dbReference type="ChEBI" id="CHEBI:65314"/>
        <dbReference type="ChEBI" id="CHEBI:65315"/>
        <dbReference type="EC" id="5.4.99.12"/>
    </reaction>
</comment>
<comment type="subunit">
    <text evidence="1">Homodimer.</text>
</comment>
<comment type="similarity">
    <text evidence="1">Belongs to the tRNA pseudouridine synthase TruA family.</text>
</comment>
<evidence type="ECO:0000255" key="1">
    <source>
        <dbReference type="HAMAP-Rule" id="MF_00171"/>
    </source>
</evidence>
<reference key="1">
    <citation type="journal article" date="2004" name="J. Bacteriol.">
        <title>Complete genome sequence of Rickettsia typhi and comparison with sequences of other Rickettsiae.</title>
        <authorList>
            <person name="McLeod M.P."/>
            <person name="Qin X."/>
            <person name="Karpathy S.E."/>
            <person name="Gioia J."/>
            <person name="Highlander S.K."/>
            <person name="Fox G.E."/>
            <person name="McNeill T.Z."/>
            <person name="Jiang H."/>
            <person name="Muzny D."/>
            <person name="Jacob L.S."/>
            <person name="Hawes A.C."/>
            <person name="Sodergren E."/>
            <person name="Gill R."/>
            <person name="Hume J."/>
            <person name="Morgan M."/>
            <person name="Fan G."/>
            <person name="Amin A.G."/>
            <person name="Gibbs R.A."/>
            <person name="Hong C."/>
            <person name="Yu X.-J."/>
            <person name="Walker D.H."/>
            <person name="Weinstock G.M."/>
        </authorList>
    </citation>
    <scope>NUCLEOTIDE SEQUENCE [LARGE SCALE GENOMIC DNA]</scope>
    <source>
        <strain>ATCC VR-144 / Wilmington</strain>
    </source>
</reference>
<keyword id="KW-0413">Isomerase</keyword>
<keyword id="KW-0819">tRNA processing</keyword>
<dbReference type="EC" id="5.4.99.12" evidence="1"/>
<dbReference type="EMBL" id="AE017197">
    <property type="protein sequence ID" value="AAU04300.1"/>
    <property type="molecule type" value="Genomic_DNA"/>
</dbReference>
<dbReference type="RefSeq" id="WP_011191274.1">
    <property type="nucleotide sequence ID" value="NC_006142.1"/>
</dbReference>
<dbReference type="SMR" id="Q68VQ6"/>
<dbReference type="KEGG" id="rty:RT0846"/>
<dbReference type="eggNOG" id="COG0101">
    <property type="taxonomic scope" value="Bacteria"/>
</dbReference>
<dbReference type="HOGENOM" id="CLU_014673_0_2_5"/>
<dbReference type="OrthoDB" id="9811823at2"/>
<dbReference type="Proteomes" id="UP000000604">
    <property type="component" value="Chromosome"/>
</dbReference>
<dbReference type="GO" id="GO:0003723">
    <property type="term" value="F:RNA binding"/>
    <property type="evidence" value="ECO:0007669"/>
    <property type="project" value="InterPro"/>
</dbReference>
<dbReference type="GO" id="GO:0160147">
    <property type="term" value="F:tRNA pseudouridine(38-40) synthase activity"/>
    <property type="evidence" value="ECO:0007669"/>
    <property type="project" value="UniProtKB-EC"/>
</dbReference>
<dbReference type="GO" id="GO:0031119">
    <property type="term" value="P:tRNA pseudouridine synthesis"/>
    <property type="evidence" value="ECO:0007669"/>
    <property type="project" value="UniProtKB-UniRule"/>
</dbReference>
<dbReference type="CDD" id="cd02570">
    <property type="entry name" value="PseudoU_synth_EcTruA"/>
    <property type="match status" value="1"/>
</dbReference>
<dbReference type="FunFam" id="3.30.70.580:FF:000001">
    <property type="entry name" value="tRNA pseudouridine synthase A"/>
    <property type="match status" value="1"/>
</dbReference>
<dbReference type="Gene3D" id="3.30.70.660">
    <property type="entry name" value="Pseudouridine synthase I, catalytic domain, C-terminal subdomain"/>
    <property type="match status" value="1"/>
</dbReference>
<dbReference type="Gene3D" id="3.30.70.580">
    <property type="entry name" value="Pseudouridine synthase I, catalytic domain, N-terminal subdomain"/>
    <property type="match status" value="1"/>
</dbReference>
<dbReference type="HAMAP" id="MF_00171">
    <property type="entry name" value="TruA"/>
    <property type="match status" value="1"/>
</dbReference>
<dbReference type="InterPro" id="IPR020103">
    <property type="entry name" value="PsdUridine_synth_cat_dom_sf"/>
</dbReference>
<dbReference type="InterPro" id="IPR001406">
    <property type="entry name" value="PsdUridine_synth_TruA"/>
</dbReference>
<dbReference type="InterPro" id="IPR020097">
    <property type="entry name" value="PsdUridine_synth_TruA_a/b_dom"/>
</dbReference>
<dbReference type="InterPro" id="IPR020095">
    <property type="entry name" value="PsdUridine_synth_TruA_C"/>
</dbReference>
<dbReference type="InterPro" id="IPR020094">
    <property type="entry name" value="TruA/RsuA/RluB/E/F_N"/>
</dbReference>
<dbReference type="NCBIfam" id="TIGR00071">
    <property type="entry name" value="hisT_truA"/>
    <property type="match status" value="1"/>
</dbReference>
<dbReference type="PANTHER" id="PTHR11142">
    <property type="entry name" value="PSEUDOURIDYLATE SYNTHASE"/>
    <property type="match status" value="1"/>
</dbReference>
<dbReference type="PANTHER" id="PTHR11142:SF0">
    <property type="entry name" value="TRNA PSEUDOURIDINE SYNTHASE-LIKE 1"/>
    <property type="match status" value="1"/>
</dbReference>
<dbReference type="Pfam" id="PF01416">
    <property type="entry name" value="PseudoU_synth_1"/>
    <property type="match status" value="2"/>
</dbReference>
<dbReference type="PIRSF" id="PIRSF001430">
    <property type="entry name" value="tRNA_psdUrid_synth"/>
    <property type="match status" value="1"/>
</dbReference>
<dbReference type="SUPFAM" id="SSF55120">
    <property type="entry name" value="Pseudouridine synthase"/>
    <property type="match status" value="1"/>
</dbReference>
<organism>
    <name type="scientific">Rickettsia typhi (strain ATCC VR-144 / Wilmington)</name>
    <dbReference type="NCBI Taxonomy" id="257363"/>
    <lineage>
        <taxon>Bacteria</taxon>
        <taxon>Pseudomonadati</taxon>
        <taxon>Pseudomonadota</taxon>
        <taxon>Alphaproteobacteria</taxon>
        <taxon>Rickettsiales</taxon>
        <taxon>Rickettsiaceae</taxon>
        <taxon>Rickettsieae</taxon>
        <taxon>Rickettsia</taxon>
        <taxon>typhus group</taxon>
    </lineage>
</organism>